<proteinExistence type="inferred from homology"/>
<dbReference type="EMBL" id="CU928145">
    <property type="protein sequence ID" value="CAV01130.1"/>
    <property type="molecule type" value="Genomic_DNA"/>
</dbReference>
<dbReference type="RefSeq" id="WP_001296623.1">
    <property type="nucleotide sequence ID" value="NZ_CP028304.1"/>
</dbReference>
<dbReference type="SMR" id="B7LA21"/>
<dbReference type="GeneID" id="93777970"/>
<dbReference type="KEGG" id="eck:EC55989_4406"/>
<dbReference type="HOGENOM" id="CLU_171174_2_0_6"/>
<dbReference type="Proteomes" id="UP000000746">
    <property type="component" value="Chromosome"/>
</dbReference>
<dbReference type="GO" id="GO:0005737">
    <property type="term" value="C:cytoplasm"/>
    <property type="evidence" value="ECO:0007669"/>
    <property type="project" value="UniProtKB-SubCell"/>
</dbReference>
<dbReference type="GO" id="GO:0000917">
    <property type="term" value="P:division septum assembly"/>
    <property type="evidence" value="ECO:0007669"/>
    <property type="project" value="UniProtKB-KW"/>
</dbReference>
<dbReference type="GO" id="GO:0043093">
    <property type="term" value="P:FtsZ-dependent cytokinesis"/>
    <property type="evidence" value="ECO:0007669"/>
    <property type="project" value="UniProtKB-UniRule"/>
</dbReference>
<dbReference type="FunFam" id="1.20.5.340:FF:000014">
    <property type="entry name" value="Cell division protein ZapB"/>
    <property type="match status" value="1"/>
</dbReference>
<dbReference type="Gene3D" id="1.20.5.340">
    <property type="match status" value="1"/>
</dbReference>
<dbReference type="HAMAP" id="MF_01196">
    <property type="entry name" value="ZapB"/>
    <property type="match status" value="1"/>
</dbReference>
<dbReference type="InterPro" id="IPR009252">
    <property type="entry name" value="Cell_div_ZapB"/>
</dbReference>
<dbReference type="NCBIfam" id="NF011951">
    <property type="entry name" value="PRK15422.1"/>
    <property type="match status" value="1"/>
</dbReference>
<dbReference type="Pfam" id="PF06005">
    <property type="entry name" value="ZapB"/>
    <property type="match status" value="1"/>
</dbReference>
<feature type="chain" id="PRO_1000164516" description="Cell division protein ZapB">
    <location>
        <begin position="1"/>
        <end position="81"/>
    </location>
</feature>
<feature type="region of interest" description="Disordered" evidence="2">
    <location>
        <begin position="36"/>
        <end position="67"/>
    </location>
</feature>
<feature type="coiled-coil region" evidence="1">
    <location>
        <begin position="5"/>
        <end position="81"/>
    </location>
</feature>
<feature type="compositionally biased region" description="Polar residues" evidence="2">
    <location>
        <begin position="37"/>
        <end position="47"/>
    </location>
</feature>
<feature type="compositionally biased region" description="Basic and acidic residues" evidence="2">
    <location>
        <begin position="48"/>
        <end position="62"/>
    </location>
</feature>
<feature type="modified residue" description="N6-acetyllysine" evidence="1">
    <location>
        <position position="10"/>
    </location>
</feature>
<name>ZAPB_ECO55</name>
<accession>B7LA21</accession>
<organism>
    <name type="scientific">Escherichia coli (strain 55989 / EAEC)</name>
    <dbReference type="NCBI Taxonomy" id="585055"/>
    <lineage>
        <taxon>Bacteria</taxon>
        <taxon>Pseudomonadati</taxon>
        <taxon>Pseudomonadota</taxon>
        <taxon>Gammaproteobacteria</taxon>
        <taxon>Enterobacterales</taxon>
        <taxon>Enterobacteriaceae</taxon>
        <taxon>Escherichia</taxon>
    </lineage>
</organism>
<evidence type="ECO:0000255" key="1">
    <source>
        <dbReference type="HAMAP-Rule" id="MF_01196"/>
    </source>
</evidence>
<evidence type="ECO:0000256" key="2">
    <source>
        <dbReference type="SAM" id="MobiDB-lite"/>
    </source>
</evidence>
<sequence length="81" mass="9635">MTMSLEVFEKLEAKVQQAIDTITLLQMEIEELKEKNNSLSQEVQNAQHQREELERENNHLKEQQNGWQERLQALLGRMEEV</sequence>
<reference key="1">
    <citation type="journal article" date="2009" name="PLoS Genet.">
        <title>Organised genome dynamics in the Escherichia coli species results in highly diverse adaptive paths.</title>
        <authorList>
            <person name="Touchon M."/>
            <person name="Hoede C."/>
            <person name="Tenaillon O."/>
            <person name="Barbe V."/>
            <person name="Baeriswyl S."/>
            <person name="Bidet P."/>
            <person name="Bingen E."/>
            <person name="Bonacorsi S."/>
            <person name="Bouchier C."/>
            <person name="Bouvet O."/>
            <person name="Calteau A."/>
            <person name="Chiapello H."/>
            <person name="Clermont O."/>
            <person name="Cruveiller S."/>
            <person name="Danchin A."/>
            <person name="Diard M."/>
            <person name="Dossat C."/>
            <person name="Karoui M.E."/>
            <person name="Frapy E."/>
            <person name="Garry L."/>
            <person name="Ghigo J.M."/>
            <person name="Gilles A.M."/>
            <person name="Johnson J."/>
            <person name="Le Bouguenec C."/>
            <person name="Lescat M."/>
            <person name="Mangenot S."/>
            <person name="Martinez-Jehanne V."/>
            <person name="Matic I."/>
            <person name="Nassif X."/>
            <person name="Oztas S."/>
            <person name="Petit M.A."/>
            <person name="Pichon C."/>
            <person name="Rouy Z."/>
            <person name="Ruf C.S."/>
            <person name="Schneider D."/>
            <person name="Tourret J."/>
            <person name="Vacherie B."/>
            <person name="Vallenet D."/>
            <person name="Medigue C."/>
            <person name="Rocha E.P.C."/>
            <person name="Denamur E."/>
        </authorList>
    </citation>
    <scope>NUCLEOTIDE SEQUENCE [LARGE SCALE GENOMIC DNA]</scope>
    <source>
        <strain>55989 / EAEC</strain>
    </source>
</reference>
<protein>
    <recommendedName>
        <fullName evidence="1">Cell division protein ZapB</fullName>
    </recommendedName>
</protein>
<gene>
    <name evidence="1" type="primary">zapB</name>
    <name type="ordered locus">EC55989_4406</name>
</gene>
<comment type="function">
    <text evidence="1">Non-essential, abundant cell division factor that is required for proper Z-ring formation. It is recruited early to the divisome by direct interaction with FtsZ, stimulating Z-ring assembly and thereby promoting cell division earlier in the cell cycle. Its recruitment to the Z-ring requires functional FtsA or ZipA.</text>
</comment>
<comment type="subunit">
    <text evidence="1">Homodimer. The ends of the coiled-coil dimer bind to each other, forming polymers. Interacts with FtsZ.</text>
</comment>
<comment type="subcellular location">
    <subcellularLocation>
        <location evidence="1">Cytoplasm</location>
    </subcellularLocation>
    <text evidence="1">Localizes to the septum at mid-cell, in a FtsZ-like pattern.</text>
</comment>
<comment type="similarity">
    <text evidence="1">Belongs to the ZapB family.</text>
</comment>
<keyword id="KW-0007">Acetylation</keyword>
<keyword id="KW-0131">Cell cycle</keyword>
<keyword id="KW-0132">Cell division</keyword>
<keyword id="KW-0175">Coiled coil</keyword>
<keyword id="KW-0963">Cytoplasm</keyword>
<keyword id="KW-1185">Reference proteome</keyword>
<keyword id="KW-0717">Septation</keyword>